<dbReference type="EMBL" id="AF136760">
    <property type="protein sequence ID" value="AAF05084.1"/>
    <property type="molecule type" value="Genomic_DNA"/>
</dbReference>
<dbReference type="EMBL" id="BA000019">
    <property type="protein sequence ID" value="BAB74822.1"/>
    <property type="molecule type" value="Genomic_DNA"/>
</dbReference>
<dbReference type="PIR" id="AD2196">
    <property type="entry name" value="AD2196"/>
</dbReference>
<dbReference type="RefSeq" id="WP_010997274.1">
    <property type="nucleotide sequence ID" value="NZ_RSCN01000001.1"/>
</dbReference>
<dbReference type="STRING" id="103690.gene:10495160"/>
<dbReference type="KEGG" id="ana:alr3123"/>
<dbReference type="eggNOG" id="COG1333">
    <property type="taxonomic scope" value="Bacteria"/>
</dbReference>
<dbReference type="OrthoDB" id="9770923at2"/>
<dbReference type="Proteomes" id="UP000002483">
    <property type="component" value="Chromosome"/>
</dbReference>
<dbReference type="GO" id="GO:0031676">
    <property type="term" value="C:plasma membrane-derived thylakoid membrane"/>
    <property type="evidence" value="ECO:0007669"/>
    <property type="project" value="UniProtKB-SubCell"/>
</dbReference>
<dbReference type="GO" id="GO:0017004">
    <property type="term" value="P:cytochrome complex assembly"/>
    <property type="evidence" value="ECO:0007669"/>
    <property type="project" value="UniProtKB-UniRule"/>
</dbReference>
<dbReference type="HAMAP" id="MF_01392">
    <property type="entry name" value="CytC_Ccs1"/>
    <property type="match status" value="1"/>
</dbReference>
<dbReference type="InterPro" id="IPR023494">
    <property type="entry name" value="Cyt_c_bgen_Ccs1/CcsB/ResB"/>
</dbReference>
<dbReference type="InterPro" id="IPR007816">
    <property type="entry name" value="ResB-like_domain"/>
</dbReference>
<dbReference type="PANTHER" id="PTHR31566">
    <property type="entry name" value="CYTOCHROME C BIOGENESIS PROTEIN CCS1, CHLOROPLASTIC"/>
    <property type="match status" value="1"/>
</dbReference>
<dbReference type="PANTHER" id="PTHR31566:SF0">
    <property type="entry name" value="CYTOCHROME C BIOGENESIS PROTEIN CCS1, CHLOROPLASTIC"/>
    <property type="match status" value="1"/>
</dbReference>
<dbReference type="Pfam" id="PF05140">
    <property type="entry name" value="ResB"/>
    <property type="match status" value="2"/>
</dbReference>
<feature type="chain" id="PRO_0000363610" description="Cytochrome c biogenesis protein CcsB">
    <location>
        <begin position="1"/>
        <end position="461"/>
    </location>
</feature>
<feature type="transmembrane region" description="Helical" evidence="1">
    <location>
        <begin position="32"/>
        <end position="52"/>
    </location>
</feature>
<feature type="transmembrane region" description="Helical" evidence="1">
    <location>
        <begin position="91"/>
        <end position="111"/>
    </location>
</feature>
<feature type="transmembrane region" description="Helical" evidence="1">
    <location>
        <begin position="178"/>
        <end position="198"/>
    </location>
</feature>
<sequence length="461" mass="51509">MTTDNSAPTASPWWSLPGKFLRREFLPVLTDLRLAIALLLIIALFSISGTVIEQGQSPAFYQSNYPEHPALFGFLTWKVIQVVGLDHVYRTWWFLSLLVLFGTSLTACTFTRQLPALKTAQRWKYYEEPRQFQKLALSAELDAGSVNSLSQILQNRRYKIFQEKDDILYARKGIVGRIGPIIVHIGIVTILLGSIWGAMTGFIAQEMVPSGETFQVKNIIDAGPLAAGQFPQDWSVRVNRFWIDYTPKGGIDQFYSDMSVLDNQGQEVDHKKIFVNQPLRYHGVTFYQTDWGISGVRVRLNKSPIFQLPMALLNTNGQGRIWGTWIPTKPDLSEGVSLLAKDLQGMVLIYDAQGKLVDTVRAGMSTQVNGVTLKVLDVVGSTGLQIKADPGIPIVYTGFGILMLGVVMSYFSHSQIWALQKGDRLYVGGKTNRAQVAFEQEVLDILERLNSQSATVINQQS</sequence>
<proteinExistence type="inferred from homology"/>
<reference key="1">
    <citation type="submission" date="1999-03" db="EMBL/GenBank/DDBJ databases">
        <title>Nucleotide and deduced amino acid sequences of Anabaena PCC7120 genes required for c-type cytochrome biogenesis.</title>
        <authorList>
            <person name="Inoue K."/>
            <person name="Bryant D.A."/>
        </authorList>
    </citation>
    <scope>NUCLEOTIDE SEQUENCE [GENOMIC DNA]</scope>
</reference>
<reference key="2">
    <citation type="journal article" date="2001" name="DNA Res.">
        <title>Complete genomic sequence of the filamentous nitrogen-fixing cyanobacterium Anabaena sp. strain PCC 7120.</title>
        <authorList>
            <person name="Kaneko T."/>
            <person name="Nakamura Y."/>
            <person name="Wolk C.P."/>
            <person name="Kuritz T."/>
            <person name="Sasamoto S."/>
            <person name="Watanabe A."/>
            <person name="Iriguchi M."/>
            <person name="Ishikawa A."/>
            <person name="Kawashima K."/>
            <person name="Kimura T."/>
            <person name="Kishida Y."/>
            <person name="Kohara M."/>
            <person name="Matsumoto M."/>
            <person name="Matsuno A."/>
            <person name="Muraki A."/>
            <person name="Nakazaki N."/>
            <person name="Shimpo S."/>
            <person name="Sugimoto M."/>
            <person name="Takazawa M."/>
            <person name="Yamada M."/>
            <person name="Yasuda M."/>
            <person name="Tabata S."/>
        </authorList>
    </citation>
    <scope>NUCLEOTIDE SEQUENCE [LARGE SCALE GENOMIC DNA]</scope>
    <source>
        <strain>PCC 7120 / SAG 25.82 / UTEX 2576</strain>
    </source>
</reference>
<protein>
    <recommendedName>
        <fullName evidence="1">Cytochrome c biogenesis protein CcsB</fullName>
    </recommendedName>
</protein>
<name>CCS1_NOSS1</name>
<organism>
    <name type="scientific">Nostoc sp. (strain PCC 7120 / SAG 25.82 / UTEX 2576)</name>
    <dbReference type="NCBI Taxonomy" id="103690"/>
    <lineage>
        <taxon>Bacteria</taxon>
        <taxon>Bacillati</taxon>
        <taxon>Cyanobacteriota</taxon>
        <taxon>Cyanophyceae</taxon>
        <taxon>Nostocales</taxon>
        <taxon>Nostocaceae</taxon>
        <taxon>Nostoc</taxon>
    </lineage>
</organism>
<accession>Q9R6Y2</accession>
<evidence type="ECO:0000255" key="1">
    <source>
        <dbReference type="HAMAP-Rule" id="MF_01392"/>
    </source>
</evidence>
<gene>
    <name evidence="1" type="primary">ccsB</name>
    <name evidence="1" type="synonym">ccs1</name>
    <name type="ordered locus">alr3123</name>
</gene>
<keyword id="KW-0201">Cytochrome c-type biogenesis</keyword>
<keyword id="KW-0472">Membrane</keyword>
<keyword id="KW-1185">Reference proteome</keyword>
<keyword id="KW-0793">Thylakoid</keyword>
<keyword id="KW-0812">Transmembrane</keyword>
<keyword id="KW-1133">Transmembrane helix</keyword>
<comment type="function">
    <text evidence="1">Required during biogenesis of c-type cytochromes (cytochrome c6 and cytochrome f) at the step of heme attachment.</text>
</comment>
<comment type="subunit">
    <text evidence="1">May interact with CcsA.</text>
</comment>
<comment type="subcellular location">
    <subcellularLocation>
        <location evidence="1">Cellular thylakoid membrane</location>
        <topology evidence="1">Multi-pass membrane protein</topology>
    </subcellularLocation>
</comment>
<comment type="similarity">
    <text evidence="1">Belongs to the Ccs1/CcsB family.</text>
</comment>